<sequence length="339" mass="37048">MRVYYDRDADVNLIKSKKVVIVGYGSQGRAHALNLKDSGAANVRVALREGSATVQKAQADGFEVMNVADAAKWADLMMMATPDELQADIYRDHIHNNLRDGAAIAFAHGLNVHCGLIEPKKTVDVVMIAPKGPGHTVRGEYQKGGGVPCLIAIHQDASGNAHDLALSYASGVGGGRSGVIETTFKEECETDLFGEQAVLCGGVVELIRTGFEVLVEAGYAPEMAYFECLNEMKLIVDLIYEGGIANMNYSISNTAEWGEYVTGPRIITAETKAEMKRVLKDIQTGKFTSDWMQEWKAGAARFKGIRRLNDAHQIEEVGGKLRAMMPWIEKNKLVDKARN</sequence>
<comment type="function">
    <text evidence="1">Involved in the biosynthesis of branched-chain amino acids (BCAA). Catalyzes an alkyl-migration followed by a ketol-acid reduction of (S)-2-acetolactate (S2AL) to yield (R)-2,3-dihydroxy-isovalerate. In the isomerase reaction, S2AL is rearranged via a Mg-dependent methyl migration to produce 3-hydroxy-3-methyl-2-ketobutyrate (HMKB). In the reductase reaction, this 2-ketoacid undergoes a metal-dependent reduction by NADPH to yield (R)-2,3-dihydroxy-isovalerate.</text>
</comment>
<comment type="catalytic activity">
    <reaction evidence="1">
        <text>(2R)-2,3-dihydroxy-3-methylbutanoate + NADP(+) = (2S)-2-acetolactate + NADPH + H(+)</text>
        <dbReference type="Rhea" id="RHEA:22068"/>
        <dbReference type="ChEBI" id="CHEBI:15378"/>
        <dbReference type="ChEBI" id="CHEBI:49072"/>
        <dbReference type="ChEBI" id="CHEBI:57783"/>
        <dbReference type="ChEBI" id="CHEBI:58349"/>
        <dbReference type="ChEBI" id="CHEBI:58476"/>
        <dbReference type="EC" id="1.1.1.86"/>
    </reaction>
</comment>
<comment type="catalytic activity">
    <reaction evidence="1">
        <text>(2R,3R)-2,3-dihydroxy-3-methylpentanoate + NADP(+) = (S)-2-ethyl-2-hydroxy-3-oxobutanoate + NADPH + H(+)</text>
        <dbReference type="Rhea" id="RHEA:13493"/>
        <dbReference type="ChEBI" id="CHEBI:15378"/>
        <dbReference type="ChEBI" id="CHEBI:49256"/>
        <dbReference type="ChEBI" id="CHEBI:49258"/>
        <dbReference type="ChEBI" id="CHEBI:57783"/>
        <dbReference type="ChEBI" id="CHEBI:58349"/>
        <dbReference type="EC" id="1.1.1.86"/>
    </reaction>
</comment>
<comment type="cofactor">
    <cofactor evidence="1">
        <name>Mg(2+)</name>
        <dbReference type="ChEBI" id="CHEBI:18420"/>
    </cofactor>
    <text evidence="1">Binds 2 magnesium ions per subunit.</text>
</comment>
<comment type="pathway">
    <text evidence="1">Amino-acid biosynthesis; L-isoleucine biosynthesis; L-isoleucine from 2-oxobutanoate: step 2/4.</text>
</comment>
<comment type="pathway">
    <text evidence="1">Amino-acid biosynthesis; L-valine biosynthesis; L-valine from pyruvate: step 2/4.</text>
</comment>
<comment type="similarity">
    <text evidence="1">Belongs to the ketol-acid reductoisomerase family.</text>
</comment>
<keyword id="KW-0028">Amino-acid biosynthesis</keyword>
<keyword id="KW-0100">Branched-chain amino acid biosynthesis</keyword>
<keyword id="KW-0460">Magnesium</keyword>
<keyword id="KW-0479">Metal-binding</keyword>
<keyword id="KW-0521">NADP</keyword>
<keyword id="KW-0560">Oxidoreductase</keyword>
<feature type="chain" id="PRO_0000226163" description="Ketol-acid reductoisomerase (NADP(+))">
    <location>
        <begin position="1"/>
        <end position="339"/>
    </location>
</feature>
<feature type="domain" description="KARI N-terminal Rossmann" evidence="2">
    <location>
        <begin position="1"/>
        <end position="182"/>
    </location>
</feature>
<feature type="domain" description="KARI C-terminal knotted" evidence="3">
    <location>
        <begin position="183"/>
        <end position="328"/>
    </location>
</feature>
<feature type="active site" evidence="1">
    <location>
        <position position="108"/>
    </location>
</feature>
<feature type="binding site" evidence="1">
    <location>
        <begin position="24"/>
        <end position="27"/>
    </location>
    <ligand>
        <name>NADP(+)</name>
        <dbReference type="ChEBI" id="CHEBI:58349"/>
    </ligand>
</feature>
<feature type="binding site" evidence="1">
    <location>
        <position position="48"/>
    </location>
    <ligand>
        <name>NADP(+)</name>
        <dbReference type="ChEBI" id="CHEBI:58349"/>
    </ligand>
</feature>
<feature type="binding site" evidence="1">
    <location>
        <position position="51"/>
    </location>
    <ligand>
        <name>NADP(+)</name>
        <dbReference type="ChEBI" id="CHEBI:58349"/>
    </ligand>
</feature>
<feature type="binding site" evidence="1">
    <location>
        <position position="53"/>
    </location>
    <ligand>
        <name>NADP(+)</name>
        <dbReference type="ChEBI" id="CHEBI:58349"/>
    </ligand>
</feature>
<feature type="binding site" evidence="1">
    <location>
        <begin position="83"/>
        <end position="86"/>
    </location>
    <ligand>
        <name>NADP(+)</name>
        <dbReference type="ChEBI" id="CHEBI:58349"/>
    </ligand>
</feature>
<feature type="binding site" evidence="1">
    <location>
        <position position="134"/>
    </location>
    <ligand>
        <name>NADP(+)</name>
        <dbReference type="ChEBI" id="CHEBI:58349"/>
    </ligand>
</feature>
<feature type="binding site" evidence="1">
    <location>
        <position position="191"/>
    </location>
    <ligand>
        <name>Mg(2+)</name>
        <dbReference type="ChEBI" id="CHEBI:18420"/>
        <label>1</label>
    </ligand>
</feature>
<feature type="binding site" evidence="1">
    <location>
        <position position="191"/>
    </location>
    <ligand>
        <name>Mg(2+)</name>
        <dbReference type="ChEBI" id="CHEBI:18420"/>
        <label>2</label>
    </ligand>
</feature>
<feature type="binding site" evidence="1">
    <location>
        <position position="195"/>
    </location>
    <ligand>
        <name>Mg(2+)</name>
        <dbReference type="ChEBI" id="CHEBI:18420"/>
        <label>1</label>
    </ligand>
</feature>
<feature type="binding site" evidence="1">
    <location>
        <position position="227"/>
    </location>
    <ligand>
        <name>Mg(2+)</name>
        <dbReference type="ChEBI" id="CHEBI:18420"/>
        <label>2</label>
    </ligand>
</feature>
<feature type="binding site" evidence="1">
    <location>
        <position position="231"/>
    </location>
    <ligand>
        <name>Mg(2+)</name>
        <dbReference type="ChEBI" id="CHEBI:18420"/>
        <label>2</label>
    </ligand>
</feature>
<feature type="binding site" evidence="1">
    <location>
        <position position="252"/>
    </location>
    <ligand>
        <name>substrate</name>
    </ligand>
</feature>
<accession>Q57CC7</accession>
<dbReference type="EC" id="1.1.1.86" evidence="1"/>
<dbReference type="EMBL" id="AE017223">
    <property type="protein sequence ID" value="AAX74707.1"/>
    <property type="molecule type" value="Genomic_DNA"/>
</dbReference>
<dbReference type="RefSeq" id="WP_002964491.1">
    <property type="nucleotide sequence ID" value="NC_006932.1"/>
</dbReference>
<dbReference type="SMR" id="Q57CC7"/>
<dbReference type="EnsemblBacteria" id="AAX74707">
    <property type="protein sequence ID" value="AAX74707"/>
    <property type="gene ID" value="BruAb1_1376"/>
</dbReference>
<dbReference type="GeneID" id="93016314"/>
<dbReference type="KEGG" id="bmb:BruAb1_1376"/>
<dbReference type="HOGENOM" id="CLU_033821_0_1_5"/>
<dbReference type="UniPathway" id="UPA00047">
    <property type="reaction ID" value="UER00056"/>
</dbReference>
<dbReference type="UniPathway" id="UPA00049">
    <property type="reaction ID" value="UER00060"/>
</dbReference>
<dbReference type="PRO" id="PR:Q57CC7"/>
<dbReference type="Proteomes" id="UP000000540">
    <property type="component" value="Chromosome I"/>
</dbReference>
<dbReference type="GO" id="GO:0005829">
    <property type="term" value="C:cytosol"/>
    <property type="evidence" value="ECO:0007669"/>
    <property type="project" value="TreeGrafter"/>
</dbReference>
<dbReference type="GO" id="GO:0004455">
    <property type="term" value="F:ketol-acid reductoisomerase activity"/>
    <property type="evidence" value="ECO:0007669"/>
    <property type="project" value="UniProtKB-UniRule"/>
</dbReference>
<dbReference type="GO" id="GO:0000287">
    <property type="term" value="F:magnesium ion binding"/>
    <property type="evidence" value="ECO:0007669"/>
    <property type="project" value="UniProtKB-UniRule"/>
</dbReference>
<dbReference type="GO" id="GO:0050661">
    <property type="term" value="F:NADP binding"/>
    <property type="evidence" value="ECO:0007669"/>
    <property type="project" value="InterPro"/>
</dbReference>
<dbReference type="GO" id="GO:0009097">
    <property type="term" value="P:isoleucine biosynthetic process"/>
    <property type="evidence" value="ECO:0007669"/>
    <property type="project" value="UniProtKB-UniRule"/>
</dbReference>
<dbReference type="GO" id="GO:0009099">
    <property type="term" value="P:L-valine biosynthetic process"/>
    <property type="evidence" value="ECO:0007669"/>
    <property type="project" value="UniProtKB-UniRule"/>
</dbReference>
<dbReference type="FunFam" id="3.40.50.720:FF:000023">
    <property type="entry name" value="Ketol-acid reductoisomerase (NADP(+))"/>
    <property type="match status" value="1"/>
</dbReference>
<dbReference type="Gene3D" id="6.10.240.10">
    <property type="match status" value="1"/>
</dbReference>
<dbReference type="Gene3D" id="3.40.50.720">
    <property type="entry name" value="NAD(P)-binding Rossmann-like Domain"/>
    <property type="match status" value="1"/>
</dbReference>
<dbReference type="HAMAP" id="MF_00435">
    <property type="entry name" value="IlvC"/>
    <property type="match status" value="1"/>
</dbReference>
<dbReference type="InterPro" id="IPR008927">
    <property type="entry name" value="6-PGluconate_DH-like_C_sf"/>
</dbReference>
<dbReference type="InterPro" id="IPR013023">
    <property type="entry name" value="KARI"/>
</dbReference>
<dbReference type="InterPro" id="IPR000506">
    <property type="entry name" value="KARI_C"/>
</dbReference>
<dbReference type="InterPro" id="IPR013116">
    <property type="entry name" value="KARI_N"/>
</dbReference>
<dbReference type="InterPro" id="IPR014359">
    <property type="entry name" value="KARI_prok"/>
</dbReference>
<dbReference type="InterPro" id="IPR036291">
    <property type="entry name" value="NAD(P)-bd_dom_sf"/>
</dbReference>
<dbReference type="NCBIfam" id="TIGR00465">
    <property type="entry name" value="ilvC"/>
    <property type="match status" value="1"/>
</dbReference>
<dbReference type="NCBIfam" id="NF004017">
    <property type="entry name" value="PRK05479.1"/>
    <property type="match status" value="1"/>
</dbReference>
<dbReference type="NCBIfam" id="NF009940">
    <property type="entry name" value="PRK13403.1"/>
    <property type="match status" value="1"/>
</dbReference>
<dbReference type="PANTHER" id="PTHR21371">
    <property type="entry name" value="KETOL-ACID REDUCTOISOMERASE, MITOCHONDRIAL"/>
    <property type="match status" value="1"/>
</dbReference>
<dbReference type="PANTHER" id="PTHR21371:SF1">
    <property type="entry name" value="KETOL-ACID REDUCTOISOMERASE, MITOCHONDRIAL"/>
    <property type="match status" value="1"/>
</dbReference>
<dbReference type="Pfam" id="PF01450">
    <property type="entry name" value="KARI_C"/>
    <property type="match status" value="1"/>
</dbReference>
<dbReference type="Pfam" id="PF07991">
    <property type="entry name" value="KARI_N"/>
    <property type="match status" value="1"/>
</dbReference>
<dbReference type="PIRSF" id="PIRSF000116">
    <property type="entry name" value="IlvC_gammaproteo"/>
    <property type="match status" value="1"/>
</dbReference>
<dbReference type="SUPFAM" id="SSF48179">
    <property type="entry name" value="6-phosphogluconate dehydrogenase C-terminal domain-like"/>
    <property type="match status" value="1"/>
</dbReference>
<dbReference type="SUPFAM" id="SSF51735">
    <property type="entry name" value="NAD(P)-binding Rossmann-fold domains"/>
    <property type="match status" value="1"/>
</dbReference>
<dbReference type="PROSITE" id="PS51851">
    <property type="entry name" value="KARI_C"/>
    <property type="match status" value="1"/>
</dbReference>
<dbReference type="PROSITE" id="PS51850">
    <property type="entry name" value="KARI_N"/>
    <property type="match status" value="1"/>
</dbReference>
<organism>
    <name type="scientific">Brucella abortus biovar 1 (strain 9-941)</name>
    <dbReference type="NCBI Taxonomy" id="262698"/>
    <lineage>
        <taxon>Bacteria</taxon>
        <taxon>Pseudomonadati</taxon>
        <taxon>Pseudomonadota</taxon>
        <taxon>Alphaproteobacteria</taxon>
        <taxon>Hyphomicrobiales</taxon>
        <taxon>Brucellaceae</taxon>
        <taxon>Brucella/Ochrobactrum group</taxon>
        <taxon>Brucella</taxon>
    </lineage>
</organism>
<reference key="1">
    <citation type="journal article" date="2005" name="J. Bacteriol.">
        <title>Completion of the genome sequence of Brucella abortus and comparison to the highly similar genomes of Brucella melitensis and Brucella suis.</title>
        <authorList>
            <person name="Halling S.M."/>
            <person name="Peterson-Burch B.D."/>
            <person name="Bricker B.J."/>
            <person name="Zuerner R.L."/>
            <person name="Qing Z."/>
            <person name="Li L.-L."/>
            <person name="Kapur V."/>
            <person name="Alt D.P."/>
            <person name="Olsen S.C."/>
        </authorList>
    </citation>
    <scope>NUCLEOTIDE SEQUENCE [LARGE SCALE GENOMIC DNA]</scope>
    <source>
        <strain>9-941</strain>
    </source>
</reference>
<proteinExistence type="inferred from homology"/>
<gene>
    <name evidence="1" type="primary">ilvC</name>
    <name type="ordered locus">BruAb1_1376</name>
</gene>
<protein>
    <recommendedName>
        <fullName evidence="1">Ketol-acid reductoisomerase (NADP(+))</fullName>
        <shortName evidence="1">KARI</shortName>
        <ecNumber evidence="1">1.1.1.86</ecNumber>
    </recommendedName>
    <alternativeName>
        <fullName evidence="1">Acetohydroxy-acid isomeroreductase</fullName>
        <shortName evidence="1">AHIR</shortName>
    </alternativeName>
    <alternativeName>
        <fullName evidence="1">Alpha-keto-beta-hydroxylacyl reductoisomerase</fullName>
    </alternativeName>
    <alternativeName>
        <fullName evidence="1">Ketol-acid reductoisomerase type 1</fullName>
    </alternativeName>
    <alternativeName>
        <fullName evidence="1">Ketol-acid reductoisomerase type I</fullName>
    </alternativeName>
</protein>
<name>ILVC_BRUAB</name>
<evidence type="ECO:0000255" key="1">
    <source>
        <dbReference type="HAMAP-Rule" id="MF_00435"/>
    </source>
</evidence>
<evidence type="ECO:0000255" key="2">
    <source>
        <dbReference type="PROSITE-ProRule" id="PRU01197"/>
    </source>
</evidence>
<evidence type="ECO:0000255" key="3">
    <source>
        <dbReference type="PROSITE-ProRule" id="PRU01198"/>
    </source>
</evidence>